<comment type="function">
    <text evidence="1">Substrate-recognition component of a Cul5-RING (CRL5) E3 ubiquitin-protein ligase complex of the DesCEND (destruction via C-end degrons) pathway, which recognizes a C-degron located at the extreme C terminus of target proteins, leading to their ubiquitination and degradation. The C-degron recognized by the DesCEND pathway is usually a motif of less than ten residues and can be present in full-length proteins, truncated proteins or proteolytically cleaved forms. The CRL5(KLHDC1) complex mediates ubiquitination and degradation of truncated SELENOS selenoprotein produced by failed UGA/Sec decoding, which ends with a glycine.</text>
</comment>
<comment type="pathway">
    <text evidence="1">Protein modification; protein ubiquitination.</text>
</comment>
<comment type="subunit">
    <text evidence="1">Component of a CRL5 E3 ubiquitin-protein ligase complex, also named ECS (Elongin BC-CUL2/5-SOCS-box protein) complex, composed of CUL5, Elongin BC (ELOB and ELOC), RBX1 and substrate-specific adapter KLHDC1.</text>
</comment>
<comment type="subcellular location">
    <subcellularLocation>
        <location evidence="1">Cytoplasm</location>
        <location evidence="1">Cytosol</location>
    </subcellularLocation>
</comment>
<proteinExistence type="evidence at transcript level"/>
<evidence type="ECO:0000250" key="1">
    <source>
        <dbReference type="UniProtKB" id="Q8N7A1"/>
    </source>
</evidence>
<evidence type="ECO:0000303" key="2">
    <source ref="1"/>
</evidence>
<evidence type="ECO:0000305" key="3"/>
<evidence type="ECO:0000312" key="4">
    <source>
        <dbReference type="MGI" id="MGI:2672853"/>
    </source>
</evidence>
<protein>
    <recommendedName>
        <fullName evidence="3">Kelch domain-containing protein 1</fullName>
    </recommendedName>
</protein>
<feature type="chain" id="PRO_0000228992" description="Kelch domain-containing protein 1">
    <location>
        <begin position="1"/>
        <end position="406"/>
    </location>
</feature>
<feature type="repeat" description="Kelch 1">
    <location>
        <begin position="24"/>
        <end position="76"/>
    </location>
</feature>
<feature type="repeat" description="Kelch 2">
    <location>
        <begin position="80"/>
        <end position="134"/>
    </location>
</feature>
<feature type="repeat" description="Kelch 3">
    <location>
        <begin position="135"/>
        <end position="181"/>
    </location>
</feature>
<feature type="repeat" description="Kelch 4">
    <location>
        <begin position="208"/>
        <end position="258"/>
    </location>
</feature>
<feature type="repeat" description="Kelch 5">
    <location>
        <begin position="260"/>
        <end position="307"/>
    </location>
</feature>
<feature type="repeat" description="Kelch 6">
    <location>
        <begin position="311"/>
        <end position="361"/>
    </location>
</feature>
<gene>
    <name evidence="2 4" type="primary">Klhdc1</name>
</gene>
<keyword id="KW-0963">Cytoplasm</keyword>
<keyword id="KW-0880">Kelch repeat</keyword>
<keyword id="KW-1185">Reference proteome</keyword>
<keyword id="KW-0677">Repeat</keyword>
<keyword id="KW-0833">Ubl conjugation pathway</keyword>
<accession>Q80YG3</accession>
<accession>Q0VDQ7</accession>
<dbReference type="EMBL" id="AY238938">
    <property type="protein sequence ID" value="AAO88963.1"/>
    <property type="molecule type" value="mRNA"/>
</dbReference>
<dbReference type="EMBL" id="AK144621">
    <property type="protein sequence ID" value="BAE25974.1"/>
    <property type="molecule type" value="mRNA"/>
</dbReference>
<dbReference type="EMBL" id="BC119568">
    <property type="protein sequence ID" value="AAI19569.1"/>
    <property type="molecule type" value="mRNA"/>
</dbReference>
<dbReference type="CCDS" id="CCDS25949.1"/>
<dbReference type="RefSeq" id="NP_839984.1">
    <property type="nucleotide sequence ID" value="NM_178253.6"/>
</dbReference>
<dbReference type="SMR" id="Q80YG3"/>
<dbReference type="FunCoup" id="Q80YG3">
    <property type="interactions" value="210"/>
</dbReference>
<dbReference type="STRING" id="10090.ENSMUSP00000068046"/>
<dbReference type="PhosphoSitePlus" id="Q80YG3"/>
<dbReference type="PaxDb" id="10090-ENSMUSP00000068046"/>
<dbReference type="ProteomicsDB" id="264945"/>
<dbReference type="Antibodypedia" id="10289">
    <property type="antibodies" value="85 antibodies from 16 providers"/>
</dbReference>
<dbReference type="DNASU" id="271005"/>
<dbReference type="Ensembl" id="ENSMUST00000063445.13">
    <property type="protein sequence ID" value="ENSMUSP00000068046.7"/>
    <property type="gene ID" value="ENSMUSG00000051890.14"/>
</dbReference>
<dbReference type="GeneID" id="271005"/>
<dbReference type="KEGG" id="mmu:271005"/>
<dbReference type="UCSC" id="uc007nrx.1">
    <property type="organism name" value="mouse"/>
</dbReference>
<dbReference type="AGR" id="MGI:2672853"/>
<dbReference type="CTD" id="122773"/>
<dbReference type="MGI" id="MGI:2672853">
    <property type="gene designation" value="Klhdc1"/>
</dbReference>
<dbReference type="VEuPathDB" id="HostDB:ENSMUSG00000051890"/>
<dbReference type="eggNOG" id="KOG0379">
    <property type="taxonomic scope" value="Eukaryota"/>
</dbReference>
<dbReference type="GeneTree" id="ENSGT00940000157509"/>
<dbReference type="InParanoid" id="Q80YG3"/>
<dbReference type="OMA" id="KWILYHV"/>
<dbReference type="OrthoDB" id="10251809at2759"/>
<dbReference type="PhylomeDB" id="Q80YG3"/>
<dbReference type="TreeFam" id="TF314081"/>
<dbReference type="UniPathway" id="UPA00143"/>
<dbReference type="BioGRID-ORCS" id="271005">
    <property type="hits" value="1 hit in 76 CRISPR screens"/>
</dbReference>
<dbReference type="ChiTaRS" id="Klhdc1">
    <property type="organism name" value="mouse"/>
</dbReference>
<dbReference type="PRO" id="PR:Q80YG3"/>
<dbReference type="Proteomes" id="UP000000589">
    <property type="component" value="Chromosome 12"/>
</dbReference>
<dbReference type="RNAct" id="Q80YG3">
    <property type="molecule type" value="protein"/>
</dbReference>
<dbReference type="Bgee" id="ENSMUSG00000051890">
    <property type="expression patterns" value="Expressed in secondary oocyte and 193 other cell types or tissues"/>
</dbReference>
<dbReference type="ExpressionAtlas" id="Q80YG3">
    <property type="expression patterns" value="baseline and differential"/>
</dbReference>
<dbReference type="GO" id="GO:0031466">
    <property type="term" value="C:Cul5-RING ubiquitin ligase complex"/>
    <property type="evidence" value="ECO:0007669"/>
    <property type="project" value="Ensembl"/>
</dbReference>
<dbReference type="GO" id="GO:0005737">
    <property type="term" value="C:cytoplasm"/>
    <property type="evidence" value="ECO:0000250"/>
    <property type="project" value="UniProtKB"/>
</dbReference>
<dbReference type="GO" id="GO:0005829">
    <property type="term" value="C:cytosol"/>
    <property type="evidence" value="ECO:0007669"/>
    <property type="project" value="UniProtKB-SubCell"/>
</dbReference>
<dbReference type="GO" id="GO:1990756">
    <property type="term" value="F:ubiquitin-like ligase-substrate adaptor activity"/>
    <property type="evidence" value="ECO:0000250"/>
    <property type="project" value="UniProtKB"/>
</dbReference>
<dbReference type="GO" id="GO:0016567">
    <property type="term" value="P:protein ubiquitination"/>
    <property type="evidence" value="ECO:0007669"/>
    <property type="project" value="UniProtKB-UniPathway"/>
</dbReference>
<dbReference type="GO" id="GO:0140627">
    <property type="term" value="P:ubiquitin-dependent protein catabolic process via the C-end degron rule pathway"/>
    <property type="evidence" value="ECO:0000250"/>
    <property type="project" value="UniProtKB"/>
</dbReference>
<dbReference type="FunFam" id="2.120.10.80:FF:000073">
    <property type="entry name" value="Kelch domain-containing protein 1"/>
    <property type="match status" value="1"/>
</dbReference>
<dbReference type="FunFam" id="2.120.10.80:FF:000012">
    <property type="entry name" value="Kelch domain-containing protein 2"/>
    <property type="match status" value="1"/>
</dbReference>
<dbReference type="Gene3D" id="2.120.10.80">
    <property type="entry name" value="Kelch-type beta propeller"/>
    <property type="match status" value="2"/>
</dbReference>
<dbReference type="InterPro" id="IPR011043">
    <property type="entry name" value="Gal_Oxase/kelch_b-propeller"/>
</dbReference>
<dbReference type="InterPro" id="IPR015915">
    <property type="entry name" value="Kelch-typ_b-propeller"/>
</dbReference>
<dbReference type="PANTHER" id="PTHR46228">
    <property type="entry name" value="KELCH DOMAIN-CONTAINING PROTEIN"/>
    <property type="match status" value="1"/>
</dbReference>
<dbReference type="PANTHER" id="PTHR46228:SF1">
    <property type="entry name" value="KELCH DOMAIN-CONTAINING PROTEIN 1"/>
    <property type="match status" value="1"/>
</dbReference>
<dbReference type="Pfam" id="PF24681">
    <property type="entry name" value="Kelch_KLHDC2_KLHL20_DRC7"/>
    <property type="match status" value="2"/>
</dbReference>
<dbReference type="SUPFAM" id="SSF50965">
    <property type="entry name" value="Galactose oxidase, central domain"/>
    <property type="match status" value="1"/>
</dbReference>
<name>KLDC1_MOUSE</name>
<reference key="1">
    <citation type="submission" date="2003-02" db="EMBL/GenBank/DDBJ databases">
        <title>Characterization of human and mouse kelch domain containing protein 1.</title>
        <authorList>
            <person name="Ng D.C.H."/>
            <person name="Chin K.-T."/>
            <person name="Zhou H.-J."/>
            <person name="Jin D.-Y."/>
        </authorList>
    </citation>
    <scope>NUCLEOTIDE SEQUENCE [MRNA]</scope>
    <source>
        <strain>FVB/N</strain>
    </source>
</reference>
<reference key="2">
    <citation type="journal article" date="2005" name="Science">
        <title>The transcriptional landscape of the mammalian genome.</title>
        <authorList>
            <person name="Carninci P."/>
            <person name="Kasukawa T."/>
            <person name="Katayama S."/>
            <person name="Gough J."/>
            <person name="Frith M.C."/>
            <person name="Maeda N."/>
            <person name="Oyama R."/>
            <person name="Ravasi T."/>
            <person name="Lenhard B."/>
            <person name="Wells C."/>
            <person name="Kodzius R."/>
            <person name="Shimokawa K."/>
            <person name="Bajic V.B."/>
            <person name="Brenner S.E."/>
            <person name="Batalov S."/>
            <person name="Forrest A.R."/>
            <person name="Zavolan M."/>
            <person name="Davis M.J."/>
            <person name="Wilming L.G."/>
            <person name="Aidinis V."/>
            <person name="Allen J.E."/>
            <person name="Ambesi-Impiombato A."/>
            <person name="Apweiler R."/>
            <person name="Aturaliya R.N."/>
            <person name="Bailey T.L."/>
            <person name="Bansal M."/>
            <person name="Baxter L."/>
            <person name="Beisel K.W."/>
            <person name="Bersano T."/>
            <person name="Bono H."/>
            <person name="Chalk A.M."/>
            <person name="Chiu K.P."/>
            <person name="Choudhary V."/>
            <person name="Christoffels A."/>
            <person name="Clutterbuck D.R."/>
            <person name="Crowe M.L."/>
            <person name="Dalla E."/>
            <person name="Dalrymple B.P."/>
            <person name="de Bono B."/>
            <person name="Della Gatta G."/>
            <person name="di Bernardo D."/>
            <person name="Down T."/>
            <person name="Engstrom P."/>
            <person name="Fagiolini M."/>
            <person name="Faulkner G."/>
            <person name="Fletcher C.F."/>
            <person name="Fukushima T."/>
            <person name="Furuno M."/>
            <person name="Futaki S."/>
            <person name="Gariboldi M."/>
            <person name="Georgii-Hemming P."/>
            <person name="Gingeras T.R."/>
            <person name="Gojobori T."/>
            <person name="Green R.E."/>
            <person name="Gustincich S."/>
            <person name="Harbers M."/>
            <person name="Hayashi Y."/>
            <person name="Hensch T.K."/>
            <person name="Hirokawa N."/>
            <person name="Hill D."/>
            <person name="Huminiecki L."/>
            <person name="Iacono M."/>
            <person name="Ikeo K."/>
            <person name="Iwama A."/>
            <person name="Ishikawa T."/>
            <person name="Jakt M."/>
            <person name="Kanapin A."/>
            <person name="Katoh M."/>
            <person name="Kawasawa Y."/>
            <person name="Kelso J."/>
            <person name="Kitamura H."/>
            <person name="Kitano H."/>
            <person name="Kollias G."/>
            <person name="Krishnan S.P."/>
            <person name="Kruger A."/>
            <person name="Kummerfeld S.K."/>
            <person name="Kurochkin I.V."/>
            <person name="Lareau L.F."/>
            <person name="Lazarevic D."/>
            <person name="Lipovich L."/>
            <person name="Liu J."/>
            <person name="Liuni S."/>
            <person name="McWilliam S."/>
            <person name="Madan Babu M."/>
            <person name="Madera M."/>
            <person name="Marchionni L."/>
            <person name="Matsuda H."/>
            <person name="Matsuzawa S."/>
            <person name="Miki H."/>
            <person name="Mignone F."/>
            <person name="Miyake S."/>
            <person name="Morris K."/>
            <person name="Mottagui-Tabar S."/>
            <person name="Mulder N."/>
            <person name="Nakano N."/>
            <person name="Nakauchi H."/>
            <person name="Ng P."/>
            <person name="Nilsson R."/>
            <person name="Nishiguchi S."/>
            <person name="Nishikawa S."/>
            <person name="Nori F."/>
            <person name="Ohara O."/>
            <person name="Okazaki Y."/>
            <person name="Orlando V."/>
            <person name="Pang K.C."/>
            <person name="Pavan W.J."/>
            <person name="Pavesi G."/>
            <person name="Pesole G."/>
            <person name="Petrovsky N."/>
            <person name="Piazza S."/>
            <person name="Reed J."/>
            <person name="Reid J.F."/>
            <person name="Ring B.Z."/>
            <person name="Ringwald M."/>
            <person name="Rost B."/>
            <person name="Ruan Y."/>
            <person name="Salzberg S.L."/>
            <person name="Sandelin A."/>
            <person name="Schneider C."/>
            <person name="Schoenbach C."/>
            <person name="Sekiguchi K."/>
            <person name="Semple C.A."/>
            <person name="Seno S."/>
            <person name="Sessa L."/>
            <person name="Sheng Y."/>
            <person name="Shibata Y."/>
            <person name="Shimada H."/>
            <person name="Shimada K."/>
            <person name="Silva D."/>
            <person name="Sinclair B."/>
            <person name="Sperling S."/>
            <person name="Stupka E."/>
            <person name="Sugiura K."/>
            <person name="Sultana R."/>
            <person name="Takenaka Y."/>
            <person name="Taki K."/>
            <person name="Tammoja K."/>
            <person name="Tan S.L."/>
            <person name="Tang S."/>
            <person name="Taylor M.S."/>
            <person name="Tegner J."/>
            <person name="Teichmann S.A."/>
            <person name="Ueda H.R."/>
            <person name="van Nimwegen E."/>
            <person name="Verardo R."/>
            <person name="Wei C.L."/>
            <person name="Yagi K."/>
            <person name="Yamanishi H."/>
            <person name="Zabarovsky E."/>
            <person name="Zhu S."/>
            <person name="Zimmer A."/>
            <person name="Hide W."/>
            <person name="Bult C."/>
            <person name="Grimmond S.M."/>
            <person name="Teasdale R.D."/>
            <person name="Liu E.T."/>
            <person name="Brusic V."/>
            <person name="Quackenbush J."/>
            <person name="Wahlestedt C."/>
            <person name="Mattick J.S."/>
            <person name="Hume D.A."/>
            <person name="Kai C."/>
            <person name="Sasaki D."/>
            <person name="Tomaru Y."/>
            <person name="Fukuda S."/>
            <person name="Kanamori-Katayama M."/>
            <person name="Suzuki M."/>
            <person name="Aoki J."/>
            <person name="Arakawa T."/>
            <person name="Iida J."/>
            <person name="Imamura K."/>
            <person name="Itoh M."/>
            <person name="Kato T."/>
            <person name="Kawaji H."/>
            <person name="Kawagashira N."/>
            <person name="Kawashima T."/>
            <person name="Kojima M."/>
            <person name="Kondo S."/>
            <person name="Konno H."/>
            <person name="Nakano K."/>
            <person name="Ninomiya N."/>
            <person name="Nishio T."/>
            <person name="Okada M."/>
            <person name="Plessy C."/>
            <person name="Shibata K."/>
            <person name="Shiraki T."/>
            <person name="Suzuki S."/>
            <person name="Tagami M."/>
            <person name="Waki K."/>
            <person name="Watahiki A."/>
            <person name="Okamura-Oho Y."/>
            <person name="Suzuki H."/>
            <person name="Kawai J."/>
            <person name="Hayashizaki Y."/>
        </authorList>
    </citation>
    <scope>NUCLEOTIDE SEQUENCE [LARGE SCALE MRNA]</scope>
    <source>
        <tissue>Lung</tissue>
    </source>
</reference>
<reference key="3">
    <citation type="journal article" date="2004" name="Genome Res.">
        <title>The status, quality, and expansion of the NIH full-length cDNA project: the Mammalian Gene Collection (MGC).</title>
        <authorList>
            <consortium name="The MGC Project Team"/>
        </authorList>
    </citation>
    <scope>NUCLEOTIDE SEQUENCE [LARGE SCALE MRNA]</scope>
</reference>
<sequence>MADPQAFCVAEERSGHCAVVDGHFLYVWGGYVSIEDNEVYLPNDEMWTYDIDSGLWKMHLMEGELPPSMSGSCGACIHGRLYVFGGYDDKGYSNRLYFVNLRTRDGTYTWEKITKFDGQPPTPRDKLSCWVYKDRLIYFGGYGYRRHSELQECFDVHDASWEEQIFWGWHNDVHVFDTKTRTWSQPEIKGGVPPQPRAAHSCAVLGNKGYVFGGRVLQTRMNDLHYLNLDTWVWSGRISVNGESPKHRSWHTLTAITDDKLFLFGGLNADNIPLSDGWIHNITTNCWKQLRHLPYTRPRLWHTACLGKENEIMVFGGSKDNLLFLDTGHCNDLLIFQTQPYSLLRSCLDCIGKNAIILKSQISLLPPKLLQQVLKKITFWTAANYRKEQRIRKEETENNQPRVSSC</sequence>
<organism>
    <name type="scientific">Mus musculus</name>
    <name type="common">Mouse</name>
    <dbReference type="NCBI Taxonomy" id="10090"/>
    <lineage>
        <taxon>Eukaryota</taxon>
        <taxon>Metazoa</taxon>
        <taxon>Chordata</taxon>
        <taxon>Craniata</taxon>
        <taxon>Vertebrata</taxon>
        <taxon>Euteleostomi</taxon>
        <taxon>Mammalia</taxon>
        <taxon>Eutheria</taxon>
        <taxon>Euarchontoglires</taxon>
        <taxon>Glires</taxon>
        <taxon>Rodentia</taxon>
        <taxon>Myomorpha</taxon>
        <taxon>Muroidea</taxon>
        <taxon>Muridae</taxon>
        <taxon>Murinae</taxon>
        <taxon>Mus</taxon>
        <taxon>Mus</taxon>
    </lineage>
</organism>